<reference key="1">
    <citation type="journal article" date="1998" name="Science">
        <title>Genome sequence of an obligate intracellular pathogen of humans: Chlamydia trachomatis.</title>
        <authorList>
            <person name="Stephens R.S."/>
            <person name="Kalman S."/>
            <person name="Lammel C.J."/>
            <person name="Fan J."/>
            <person name="Marathe R."/>
            <person name="Aravind L."/>
            <person name="Mitchell W.P."/>
            <person name="Olinger L."/>
            <person name="Tatusov R.L."/>
            <person name="Zhao Q."/>
            <person name="Koonin E.V."/>
            <person name="Davis R.W."/>
        </authorList>
    </citation>
    <scope>NUCLEOTIDE SEQUENCE [LARGE SCALE GENOMIC DNA]</scope>
    <source>
        <strain>ATCC VR-885 / DSM 19411 / UW-3/Cx</strain>
    </source>
</reference>
<accession>P66516</accession>
<accession>O84346</accession>
<evidence type="ECO:0000256" key="1">
    <source>
        <dbReference type="SAM" id="MobiDB-lite"/>
    </source>
</evidence>
<evidence type="ECO:0000305" key="2"/>
<sequence>MPSVKVRVGEPIDRALRILKKKIDKEGILKTSKSHRFYDKPSVKKRAKSKAAAKYRGR</sequence>
<feature type="chain" id="PRO_0000178325" description="Small ribosomal subunit protein bS21">
    <location>
        <begin position="1"/>
        <end position="58"/>
    </location>
</feature>
<feature type="region of interest" description="Disordered" evidence="1">
    <location>
        <begin position="37"/>
        <end position="58"/>
    </location>
</feature>
<feature type="compositionally biased region" description="Basic residues" evidence="1">
    <location>
        <begin position="43"/>
        <end position="58"/>
    </location>
</feature>
<proteinExistence type="inferred from homology"/>
<comment type="similarity">
    <text evidence="2">Belongs to the bacterial ribosomal protein bS21 family.</text>
</comment>
<gene>
    <name type="primary">rpsU</name>
    <name type="synonym">rs21</name>
    <name type="ordered locus">CT_342</name>
</gene>
<organism>
    <name type="scientific">Chlamydia trachomatis serovar D (strain ATCC VR-885 / DSM 19411 / UW-3/Cx)</name>
    <dbReference type="NCBI Taxonomy" id="272561"/>
    <lineage>
        <taxon>Bacteria</taxon>
        <taxon>Pseudomonadati</taxon>
        <taxon>Chlamydiota</taxon>
        <taxon>Chlamydiia</taxon>
        <taxon>Chlamydiales</taxon>
        <taxon>Chlamydiaceae</taxon>
        <taxon>Chlamydia/Chlamydophila group</taxon>
        <taxon>Chlamydia</taxon>
    </lineage>
</organism>
<dbReference type="EMBL" id="AE001273">
    <property type="protein sequence ID" value="AAC67937.1"/>
    <property type="molecule type" value="Genomic_DNA"/>
</dbReference>
<dbReference type="PIR" id="A71527">
    <property type="entry name" value="A71527"/>
</dbReference>
<dbReference type="RefSeq" id="NP_219849.3">
    <property type="nucleotide sequence ID" value="NC_000117.1"/>
</dbReference>
<dbReference type="RefSeq" id="WP_009871693.1">
    <property type="nucleotide sequence ID" value="NC_000117.1"/>
</dbReference>
<dbReference type="SMR" id="P66516"/>
<dbReference type="FunCoup" id="P66516">
    <property type="interactions" value="161"/>
</dbReference>
<dbReference type="STRING" id="272561.CT_342"/>
<dbReference type="EnsemblBacteria" id="AAC67937">
    <property type="protein sequence ID" value="AAC67937"/>
    <property type="gene ID" value="CT_342"/>
</dbReference>
<dbReference type="GeneID" id="1245980"/>
<dbReference type="GeneID" id="884778"/>
<dbReference type="KEGG" id="ctr:CT_342"/>
<dbReference type="PATRIC" id="fig|272561.5.peg.369"/>
<dbReference type="HOGENOM" id="CLU_159258_2_3_0"/>
<dbReference type="InParanoid" id="P66516"/>
<dbReference type="OrthoDB" id="9799244at2"/>
<dbReference type="PRO" id="PR:P66516"/>
<dbReference type="Proteomes" id="UP000000431">
    <property type="component" value="Chromosome"/>
</dbReference>
<dbReference type="GO" id="GO:1990904">
    <property type="term" value="C:ribonucleoprotein complex"/>
    <property type="evidence" value="ECO:0007669"/>
    <property type="project" value="UniProtKB-KW"/>
</dbReference>
<dbReference type="GO" id="GO:0005840">
    <property type="term" value="C:ribosome"/>
    <property type="evidence" value="ECO:0007669"/>
    <property type="project" value="UniProtKB-KW"/>
</dbReference>
<dbReference type="GO" id="GO:0003735">
    <property type="term" value="F:structural constituent of ribosome"/>
    <property type="evidence" value="ECO:0007669"/>
    <property type="project" value="InterPro"/>
</dbReference>
<dbReference type="GO" id="GO:0006412">
    <property type="term" value="P:translation"/>
    <property type="evidence" value="ECO:0007669"/>
    <property type="project" value="UniProtKB-UniRule"/>
</dbReference>
<dbReference type="Gene3D" id="1.20.5.1150">
    <property type="entry name" value="Ribosomal protein S8"/>
    <property type="match status" value="1"/>
</dbReference>
<dbReference type="HAMAP" id="MF_00358">
    <property type="entry name" value="Ribosomal_bS21"/>
    <property type="match status" value="1"/>
</dbReference>
<dbReference type="InterPro" id="IPR001911">
    <property type="entry name" value="Ribosomal_bS21"/>
</dbReference>
<dbReference type="InterPro" id="IPR038380">
    <property type="entry name" value="Ribosomal_bS21_sf"/>
</dbReference>
<dbReference type="NCBIfam" id="TIGR00030">
    <property type="entry name" value="S21p"/>
    <property type="match status" value="1"/>
</dbReference>
<dbReference type="Pfam" id="PF01165">
    <property type="entry name" value="Ribosomal_S21"/>
    <property type="match status" value="1"/>
</dbReference>
<dbReference type="PRINTS" id="PR00976">
    <property type="entry name" value="RIBOSOMALS21"/>
</dbReference>
<keyword id="KW-1185">Reference proteome</keyword>
<keyword id="KW-0687">Ribonucleoprotein</keyword>
<keyword id="KW-0689">Ribosomal protein</keyword>
<name>RS21_CHLTR</name>
<protein>
    <recommendedName>
        <fullName evidence="2">Small ribosomal subunit protein bS21</fullName>
    </recommendedName>
    <alternativeName>
        <fullName>30S ribosomal protein S21</fullName>
    </alternativeName>
</protein>